<reference key="1">
    <citation type="journal article" date="2000" name="Plant Physiol.">
        <title>Cloning and functional analysis of sucrose:sucrose 1-fructosyltransferase from tall fescue.</title>
        <authorList>
            <person name="Luescher M."/>
            <person name="Hochstrasser U."/>
            <person name="Vogel G."/>
            <person name="Aeschbacher R."/>
            <person name="Galati V."/>
            <person name="Nelson C.J."/>
            <person name="Boller T."/>
            <person name="Wiemken A."/>
        </authorList>
    </citation>
    <scope>NUCLEOTIDE SEQUENCE [MRNA]</scope>
    <scope>PROTEIN SEQUENCE OF 107-116</scope>
    <scope>FUNCTION</scope>
    <scope>CATALYTIC ACTIVITY</scope>
    <scope>TISSUE SPECIFICITY</scope>
    <source>
        <strain>cv. Hyt</strain>
    </source>
</reference>
<organism>
    <name type="scientific">Festuca arundinacea</name>
    <name type="common">Tall fescue</name>
    <name type="synonym">Schedonorus arundinaceus</name>
    <dbReference type="NCBI Taxonomy" id="4606"/>
    <lineage>
        <taxon>Eukaryota</taxon>
        <taxon>Viridiplantae</taxon>
        <taxon>Streptophyta</taxon>
        <taxon>Embryophyta</taxon>
        <taxon>Tracheophyta</taxon>
        <taxon>Spermatophyta</taxon>
        <taxon>Magnoliopsida</taxon>
        <taxon>Liliopsida</taxon>
        <taxon>Poales</taxon>
        <taxon>Poaceae</taxon>
        <taxon>BOP clade</taxon>
        <taxon>Pooideae</taxon>
        <taxon>Poodae</taxon>
        <taxon>Poeae</taxon>
        <taxon>Poeae Chloroplast Group 2 (Poeae type)</taxon>
        <taxon>Loliodinae</taxon>
        <taxon>Loliinae</taxon>
        <taxon>Lolium</taxon>
    </lineage>
</organism>
<keyword id="KW-0903">Direct protein sequencing</keyword>
<keyword id="KW-0325">Glycoprotein</keyword>
<keyword id="KW-0326">Glycosidase</keyword>
<keyword id="KW-0328">Glycosyltransferase</keyword>
<keyword id="KW-0378">Hydrolase</keyword>
<keyword id="KW-0808">Transferase</keyword>
<keyword id="KW-0926">Vacuole</keyword>
<protein>
    <recommendedName>
        <fullName>Sucrose:sucrose 1-fructosyltransferase</fullName>
        <ecNumber>2.4.1.99</ecNumber>
    </recommendedName>
    <alternativeName>
        <fullName>Sucrose 1(F)-fructosyltransferase</fullName>
    </alternativeName>
    <alternativeName>
        <fullName>Sucrose:sucrose 1(F)-beta-D-fructosyltransferase</fullName>
    </alternativeName>
</protein>
<gene>
    <name type="primary">1-SST</name>
</gene>
<sequence length="654" mass="71382">MESSAVVPGTTAPLLPYAYAPLPSSADDARENQSSGGVRWRVCAAVLAASALAVLIVVGLLAGGRVDRGPAGGDVASAAVPAVPMEIPRSRGKDFGVSEKASGAYSADGGFPWSNAMLQWQRTGFHFQPEKHYMNDPNGPVYYGGWYHLFYQYNPKGDSWGNIAWAHAVSKDMVNWRHLPLAMVPDQWYDSNGVLTGSITVLPDGQVILLYTGNTDTLAQVQCLATPADPSDPLLREWIKHPANPILYPPPGIGLKDFRDPLTAWFDHSDNTWRTVIGSKDDDGHAGIILSYKTKDFVNYELMPGNMHRGPDGTGMYECIDLYPVGGNSSEMLGGDDSPDVLFVLKESSDDERHDYYALGRFDAAANIWTPIDQELDLGIGLRYDWGKYYASKSFYDQKKNRRIVWAYIGETDSEQADITKGWANLMTIPRTVELDKKTRTNLIQWPVEELDTLRRNSTDLSGITVDAGSVIRLPLHQGAQIDIEASFQLNSSDVDALTEADVSYNCSTSGAAVRGALGPFGLLVLANGRTEQTAVYFYVSKGVDGALQTHFCHDESRSTQAKDVVNRMIGSIVPVLDGETFSVRVLVDHSIVQSFAMGGRITATSRAYPTEAIYAAAGVYLFNNATGATVTAERLVVYEMASADNHIFTNDDL</sequence>
<proteinExistence type="evidence at protein level"/>
<dbReference type="EC" id="2.4.1.99"/>
<dbReference type="EMBL" id="AJ297369">
    <property type="protein sequence ID" value="CAC05261.1"/>
    <property type="molecule type" value="mRNA"/>
</dbReference>
<dbReference type="SMR" id="Q9FSV7"/>
<dbReference type="CAZy" id="GH32">
    <property type="family name" value="Glycoside Hydrolase Family 32"/>
</dbReference>
<dbReference type="GlyCosmos" id="Q9FSV7">
    <property type="glycosylation" value="6 sites, No reported glycans"/>
</dbReference>
<dbReference type="KEGG" id="ag:CAC05261"/>
<dbReference type="BRENDA" id="2.4.1.99">
    <property type="organism ID" value="2244"/>
</dbReference>
<dbReference type="GO" id="GO:0005773">
    <property type="term" value="C:vacuole"/>
    <property type="evidence" value="ECO:0007669"/>
    <property type="project" value="UniProtKB-SubCell"/>
</dbReference>
<dbReference type="GO" id="GO:0004564">
    <property type="term" value="F:beta-fructofuranosidase activity"/>
    <property type="evidence" value="ECO:0007669"/>
    <property type="project" value="InterPro"/>
</dbReference>
<dbReference type="GO" id="GO:0050306">
    <property type="term" value="F:sucrose 1F-fructosyltransferase activity"/>
    <property type="evidence" value="ECO:0000314"/>
    <property type="project" value="UniProtKB"/>
</dbReference>
<dbReference type="GO" id="GO:0005975">
    <property type="term" value="P:carbohydrate metabolic process"/>
    <property type="evidence" value="ECO:0000314"/>
    <property type="project" value="UniProtKB"/>
</dbReference>
<dbReference type="CDD" id="cd18624">
    <property type="entry name" value="GH32_Fruct1-like"/>
    <property type="match status" value="1"/>
</dbReference>
<dbReference type="Gene3D" id="2.60.120.560">
    <property type="entry name" value="Exo-inulinase, domain 1"/>
    <property type="match status" value="1"/>
</dbReference>
<dbReference type="Gene3D" id="2.115.10.20">
    <property type="entry name" value="Glycosyl hydrolase domain, family 43"/>
    <property type="match status" value="1"/>
</dbReference>
<dbReference type="InterPro" id="IPR021792">
    <property type="entry name" value="Beta-fructofuranosidase_N"/>
</dbReference>
<dbReference type="InterPro" id="IPR013320">
    <property type="entry name" value="ConA-like_dom_sf"/>
</dbReference>
<dbReference type="InterPro" id="IPR050551">
    <property type="entry name" value="Fructan_Metab_Enzymes"/>
</dbReference>
<dbReference type="InterPro" id="IPR001362">
    <property type="entry name" value="Glyco_hydro_32"/>
</dbReference>
<dbReference type="InterPro" id="IPR018053">
    <property type="entry name" value="Glyco_hydro_32_AS"/>
</dbReference>
<dbReference type="InterPro" id="IPR013189">
    <property type="entry name" value="Glyco_hydro_32_C"/>
</dbReference>
<dbReference type="InterPro" id="IPR013148">
    <property type="entry name" value="Glyco_hydro_32_N"/>
</dbReference>
<dbReference type="InterPro" id="IPR023296">
    <property type="entry name" value="Glyco_hydro_beta-prop_sf"/>
</dbReference>
<dbReference type="PANTHER" id="PTHR31953">
    <property type="entry name" value="BETA-FRUCTOFURANOSIDASE, INSOLUBLE ISOENZYME CWINV1-RELATED"/>
    <property type="match status" value="1"/>
</dbReference>
<dbReference type="Pfam" id="PF08244">
    <property type="entry name" value="Glyco_hydro_32C"/>
    <property type="match status" value="1"/>
</dbReference>
<dbReference type="Pfam" id="PF00251">
    <property type="entry name" value="Glyco_hydro_32N"/>
    <property type="match status" value="1"/>
</dbReference>
<dbReference type="Pfam" id="PF11837">
    <property type="entry name" value="INV_N"/>
    <property type="match status" value="1"/>
</dbReference>
<dbReference type="SMART" id="SM00640">
    <property type="entry name" value="Glyco_32"/>
    <property type="match status" value="1"/>
</dbReference>
<dbReference type="SUPFAM" id="SSF75005">
    <property type="entry name" value="Arabinanase/levansucrase/invertase"/>
    <property type="match status" value="1"/>
</dbReference>
<dbReference type="SUPFAM" id="SSF49899">
    <property type="entry name" value="Concanavalin A-like lectins/glucanases"/>
    <property type="match status" value="1"/>
</dbReference>
<dbReference type="PROSITE" id="PS00609">
    <property type="entry name" value="GLYCOSYL_HYDROL_F32"/>
    <property type="match status" value="1"/>
</dbReference>
<name>SST_FESAR</name>
<accession>Q9FSV7</accession>
<evidence type="ECO:0000250" key="1"/>
<evidence type="ECO:0000255" key="2"/>
<evidence type="ECO:0000255" key="3">
    <source>
        <dbReference type="PROSITE-ProRule" id="PRU10067"/>
    </source>
</evidence>
<evidence type="ECO:0000269" key="4">
    <source>
    </source>
</evidence>
<evidence type="ECO:0000305" key="5"/>
<comment type="function">
    <text evidence="4">Transferase involved in fructan biosynthesis that catalyzes the production of 1-kestose (fructose and nystose to a lower extent) from sucrose. Also exhibits some hydrolase activity toward 1-kestose, thus producing fructose and sucrose. A weak fructosyltransferase activity leads to the formation of nystose from 1-kestose.</text>
</comment>
<comment type="catalytic activity">
    <reaction evidence="4">
        <text>2 sucrose = 1(F)-beta-D-fructosylsucrose + D-glucose</text>
        <dbReference type="Rhea" id="RHEA:23312"/>
        <dbReference type="ChEBI" id="CHEBI:4167"/>
        <dbReference type="ChEBI" id="CHEBI:16885"/>
        <dbReference type="ChEBI" id="CHEBI:17992"/>
        <dbReference type="EC" id="2.4.1.99"/>
    </reaction>
</comment>
<comment type="subunit">
    <text evidence="1">Monomer.</text>
</comment>
<comment type="subcellular location">
    <subcellularLocation>
        <location evidence="1">Vacuole</location>
    </subcellularLocation>
</comment>
<comment type="tissue specificity">
    <text evidence="4">Accumulates at the base of growing leaves.</text>
</comment>
<comment type="similarity">
    <text evidence="5">Belongs to the glycosyl hydrolase 32 family.</text>
</comment>
<feature type="propeptide" id="PRO_0000419020" evidence="4">
    <location>
        <begin position="1"/>
        <end position="106"/>
    </location>
</feature>
<feature type="chain" id="PRO_0000419021" description="Sucrose:sucrose 1-fructosyltransferase">
    <location>
        <begin position="107"/>
        <end position="654"/>
    </location>
</feature>
<feature type="active site" evidence="3">
    <location>
        <position position="136"/>
    </location>
</feature>
<feature type="glycosylation site" description="N-linked (GlcNAc...) asparagine" evidence="2">
    <location>
        <position position="32"/>
    </location>
</feature>
<feature type="glycosylation site" description="N-linked (GlcNAc...) asparagine" evidence="2">
    <location>
        <position position="328"/>
    </location>
</feature>
<feature type="glycosylation site" description="N-linked (GlcNAc...) asparagine" evidence="2">
    <location>
        <position position="457"/>
    </location>
</feature>
<feature type="glycosylation site" description="N-linked (GlcNAc...) asparagine" evidence="2">
    <location>
        <position position="491"/>
    </location>
</feature>
<feature type="glycosylation site" description="N-linked (GlcNAc...) asparagine" evidence="2">
    <location>
        <position position="506"/>
    </location>
</feature>
<feature type="glycosylation site" description="N-linked (GlcNAc...) asparagine" evidence="2">
    <location>
        <position position="625"/>
    </location>
</feature>